<accession>P04956</accession>
<accession>A3DCU3</accession>
<comment type="function">
    <text>This enzyme catalyzes the endohydrolysis of 1,4-beta-glucosidic linkages in cellulose, lichenin and cereal beta-D-glucans.</text>
</comment>
<comment type="catalytic activity">
    <reaction>
        <text>Endohydrolysis of (1-&gt;4)-beta-D-glucosidic linkages in cellulose, lichenin and cereal beta-D-glucans.</text>
        <dbReference type="EC" id="3.2.1.4"/>
    </reaction>
</comment>
<comment type="similarity">
    <text evidence="4">Belongs to the glycosyl hydrolase 5 (cellulase A) family.</text>
</comment>
<protein>
    <recommendedName>
        <fullName>Endoglucanase B</fullName>
        <ecNumber>3.2.1.4</ecNumber>
    </recommendedName>
    <alternativeName>
        <fullName>Cellulase B</fullName>
    </alternativeName>
    <alternativeName>
        <fullName>Endo-1,4-beta-glucanase B</fullName>
        <shortName>EgB</shortName>
    </alternativeName>
</protein>
<sequence length="563" mass="63929">MKKFLVLLIALIMIATLLVVPGVQTSAEGSYADLAEPDDDWLHVEGTNIVDKYGNKVWITGANWFGFNCRERMLLDSYHSDIIADIELVADKGINVVRMPIATDLLYAWSQGIYPPSTDTSYNNPALAGLNSYELFNFMLENFKRVGIKVILDVHSPETDNQGHNYPLWYNTTITEEIFKKAWVWVAERYKNDDTIIGFDLKNEPHTNTGTMKIKAQSAIWDDSNHPNNWKRVAEETALAILEVHPNVLIFVEGVEMYPKDGIWDDETFDTSPWTGNNDYYGNWWGGNLRGVKDYPINLGKYQSQLVYSPHDYGPIVYEQDWFKGDFITANDEQAKRILYEQCWRDNWAYIMEEGISPLLLGEWGGMTEGGHPLLDLNLKYLRCMRDFILENKYKLHHTFWCINIDSADTGGLFTRDEGTPFPGGRDLKWNDNKYDNYLYPVLWKTEDGKFIGLDHKIPLGRNGISISQLSNYTPSVTPSPSATPSPTTITAPPTDTVTYGDVNGDGRVNSSDVALLKRYLLGLVENINKEAADVNVSGTVNSTDLAIMKRYVLRSISELPYK</sequence>
<proteinExistence type="inferred from homology"/>
<dbReference type="EC" id="3.2.1.4"/>
<dbReference type="EMBL" id="X03592">
    <property type="protein sequence ID" value="CAA27266.1"/>
    <property type="molecule type" value="Genomic_DNA"/>
</dbReference>
<dbReference type="EMBL" id="CP000568">
    <property type="protein sequence ID" value="ABN51772.1"/>
    <property type="molecule type" value="Genomic_DNA"/>
</dbReference>
<dbReference type="PIR" id="A23512">
    <property type="entry name" value="CZCLBM"/>
</dbReference>
<dbReference type="RefSeq" id="WP_003517581.1">
    <property type="nucleotide sequence ID" value="NC_009012.1"/>
</dbReference>
<dbReference type="SMR" id="P04956"/>
<dbReference type="STRING" id="203119.Cthe_0536"/>
<dbReference type="CAZy" id="GH5">
    <property type="family name" value="Glycoside Hydrolase Family 5"/>
</dbReference>
<dbReference type="DNASU" id="4808285"/>
<dbReference type="GeneID" id="35803054"/>
<dbReference type="KEGG" id="cth:Cthe_0536"/>
<dbReference type="eggNOG" id="COG2730">
    <property type="taxonomic scope" value="Bacteria"/>
</dbReference>
<dbReference type="eggNOG" id="COG4447">
    <property type="taxonomic scope" value="Bacteria"/>
</dbReference>
<dbReference type="HOGENOM" id="CLU_020735_2_0_9"/>
<dbReference type="OrthoDB" id="9800475at2"/>
<dbReference type="BioCyc" id="MetaCyc:MONOMER-16415"/>
<dbReference type="BRENDA" id="3.2.1.4">
    <property type="organism ID" value="1530"/>
</dbReference>
<dbReference type="Proteomes" id="UP000002145">
    <property type="component" value="Chromosome"/>
</dbReference>
<dbReference type="GO" id="GO:0008810">
    <property type="term" value="F:cellulase activity"/>
    <property type="evidence" value="ECO:0007669"/>
    <property type="project" value="UniProtKB-EC"/>
</dbReference>
<dbReference type="GO" id="GO:0030245">
    <property type="term" value="P:cellulose catabolic process"/>
    <property type="evidence" value="ECO:0007669"/>
    <property type="project" value="UniProtKB-KW"/>
</dbReference>
<dbReference type="CDD" id="cd14256">
    <property type="entry name" value="Dockerin_I"/>
    <property type="match status" value="1"/>
</dbReference>
<dbReference type="Gene3D" id="1.10.1330.10">
    <property type="entry name" value="Dockerin domain"/>
    <property type="match status" value="1"/>
</dbReference>
<dbReference type="Gene3D" id="3.20.20.80">
    <property type="entry name" value="Glycosidases"/>
    <property type="match status" value="1"/>
</dbReference>
<dbReference type="InterPro" id="IPR002105">
    <property type="entry name" value="Dockerin_1_rpt"/>
</dbReference>
<dbReference type="InterPro" id="IPR016134">
    <property type="entry name" value="Dockerin_dom"/>
</dbReference>
<dbReference type="InterPro" id="IPR036439">
    <property type="entry name" value="Dockerin_dom_sf"/>
</dbReference>
<dbReference type="InterPro" id="IPR018247">
    <property type="entry name" value="EF_Hand_1_Ca_BS"/>
</dbReference>
<dbReference type="InterPro" id="IPR001547">
    <property type="entry name" value="Glyco_hydro_5"/>
</dbReference>
<dbReference type="InterPro" id="IPR018087">
    <property type="entry name" value="Glyco_hydro_5_CS"/>
</dbReference>
<dbReference type="InterPro" id="IPR017853">
    <property type="entry name" value="Glycoside_hydrolase_SF"/>
</dbReference>
<dbReference type="PANTHER" id="PTHR35923:SF2">
    <property type="entry name" value="ENDOGLUCANASE"/>
    <property type="match status" value="1"/>
</dbReference>
<dbReference type="PANTHER" id="PTHR35923">
    <property type="entry name" value="MAJOR EXTRACELLULAR ENDOGLUCANASE"/>
    <property type="match status" value="1"/>
</dbReference>
<dbReference type="Pfam" id="PF00150">
    <property type="entry name" value="Cellulase"/>
    <property type="match status" value="1"/>
</dbReference>
<dbReference type="Pfam" id="PF00404">
    <property type="entry name" value="Dockerin_1"/>
    <property type="match status" value="1"/>
</dbReference>
<dbReference type="SUPFAM" id="SSF51445">
    <property type="entry name" value="(Trans)glycosidases"/>
    <property type="match status" value="1"/>
</dbReference>
<dbReference type="SUPFAM" id="SSF63446">
    <property type="entry name" value="Type I dockerin domain"/>
    <property type="match status" value="1"/>
</dbReference>
<dbReference type="PROSITE" id="PS00448">
    <property type="entry name" value="CLOS_CELLULOSOME_RPT"/>
    <property type="match status" value="2"/>
</dbReference>
<dbReference type="PROSITE" id="PS51766">
    <property type="entry name" value="DOCKERIN"/>
    <property type="match status" value="1"/>
</dbReference>
<dbReference type="PROSITE" id="PS00018">
    <property type="entry name" value="EF_HAND_1"/>
    <property type="match status" value="1"/>
</dbReference>
<dbReference type="PROSITE" id="PS00659">
    <property type="entry name" value="GLYCOSYL_HYDROL_F5"/>
    <property type="match status" value="1"/>
</dbReference>
<reference key="1">
    <citation type="journal article" date="1986" name="Nucleic Acids Res.">
        <title>Sequence of the cellulase gene of Clostridium thermocellum coding for endoglucanase B.</title>
        <authorList>
            <person name="Grepinet O."/>
            <person name="Beguin P."/>
        </authorList>
    </citation>
    <scope>NUCLEOTIDE SEQUENCE [GENOMIC DNA]</scope>
</reference>
<reference key="2">
    <citation type="submission" date="2007-02" db="EMBL/GenBank/DDBJ databases">
        <title>Complete sequence of Clostridium thermocellum ATCC 27405.</title>
        <authorList>
            <consortium name="US DOE Joint Genome Institute"/>
            <person name="Copeland A."/>
            <person name="Lucas S."/>
            <person name="Lapidus A."/>
            <person name="Barry K."/>
            <person name="Detter J.C."/>
            <person name="Glavina del Rio T."/>
            <person name="Hammon N."/>
            <person name="Israni S."/>
            <person name="Dalin E."/>
            <person name="Tice H."/>
            <person name="Pitluck S."/>
            <person name="Chertkov O."/>
            <person name="Brettin T."/>
            <person name="Bruce D."/>
            <person name="Han C."/>
            <person name="Tapia R."/>
            <person name="Gilna P."/>
            <person name="Schmutz J."/>
            <person name="Larimer F."/>
            <person name="Land M."/>
            <person name="Hauser L."/>
            <person name="Kyrpides N."/>
            <person name="Mikhailova N."/>
            <person name="Wu J.H.D."/>
            <person name="Newcomb M."/>
            <person name="Richardson P."/>
        </authorList>
    </citation>
    <scope>NUCLEOTIDE SEQUENCE [LARGE SCALE GENOMIC DNA]</scope>
    <source>
        <strain>ATCC 27405 / DSM 1237 / JCM 9322 / NBRC 103400 / NCIMB 10682 / NRRL B-4536 / VPI 7372</strain>
    </source>
</reference>
<feature type="signal peptide" description="Or 31">
    <location>
        <begin position="1"/>
        <end position="27"/>
    </location>
</feature>
<feature type="chain" id="PRO_0000007850" description="Endoglucanase B">
    <location>
        <begin position="28"/>
        <end position="563"/>
    </location>
</feature>
<feature type="domain" description="Dockerin" evidence="2">
    <location>
        <begin position="496"/>
        <end position="562"/>
    </location>
</feature>
<feature type="region of interest" description="Disordered" evidence="3">
    <location>
        <begin position="476"/>
        <end position="495"/>
    </location>
</feature>
<feature type="active site" description="Proton donor" evidence="1">
    <location>
        <position position="204"/>
    </location>
</feature>
<feature type="active site" description="Nucleophile" evidence="1">
    <location>
        <position position="363"/>
    </location>
</feature>
<gene>
    <name type="primary">celB</name>
    <name type="ordered locus">Cthe_0536</name>
</gene>
<name>GUNB_ACET2</name>
<evidence type="ECO:0000250" key="1"/>
<evidence type="ECO:0000255" key="2">
    <source>
        <dbReference type="PROSITE-ProRule" id="PRU01102"/>
    </source>
</evidence>
<evidence type="ECO:0000256" key="3">
    <source>
        <dbReference type="SAM" id="MobiDB-lite"/>
    </source>
</evidence>
<evidence type="ECO:0000305" key="4"/>
<keyword id="KW-0119">Carbohydrate metabolism</keyword>
<keyword id="KW-0136">Cellulose degradation</keyword>
<keyword id="KW-0326">Glycosidase</keyword>
<keyword id="KW-0378">Hydrolase</keyword>
<keyword id="KW-0624">Polysaccharide degradation</keyword>
<keyword id="KW-1185">Reference proteome</keyword>
<keyword id="KW-0732">Signal</keyword>
<organism>
    <name type="scientific">Acetivibrio thermocellus (strain ATCC 27405 / DSM 1237 / JCM 9322 / NBRC 103400 / NCIMB 10682 / NRRL B-4536 / VPI 7372)</name>
    <name type="common">Clostridium thermocellum</name>
    <dbReference type="NCBI Taxonomy" id="203119"/>
    <lineage>
        <taxon>Bacteria</taxon>
        <taxon>Bacillati</taxon>
        <taxon>Bacillota</taxon>
        <taxon>Clostridia</taxon>
        <taxon>Eubacteriales</taxon>
        <taxon>Oscillospiraceae</taxon>
        <taxon>Acetivibrio</taxon>
    </lineage>
</organism>